<accession>Q5WEJ5</accession>
<organism>
    <name type="scientific">Shouchella clausii (strain KSM-K16)</name>
    <name type="common">Alkalihalobacillus clausii</name>
    <dbReference type="NCBI Taxonomy" id="66692"/>
    <lineage>
        <taxon>Bacteria</taxon>
        <taxon>Bacillati</taxon>
        <taxon>Bacillota</taxon>
        <taxon>Bacilli</taxon>
        <taxon>Bacillales</taxon>
        <taxon>Bacillaceae</taxon>
        <taxon>Shouchella</taxon>
    </lineage>
</organism>
<name>SYFA_SHOC1</name>
<comment type="catalytic activity">
    <reaction evidence="1">
        <text>tRNA(Phe) + L-phenylalanine + ATP = L-phenylalanyl-tRNA(Phe) + AMP + diphosphate + H(+)</text>
        <dbReference type="Rhea" id="RHEA:19413"/>
        <dbReference type="Rhea" id="RHEA-COMP:9668"/>
        <dbReference type="Rhea" id="RHEA-COMP:9699"/>
        <dbReference type="ChEBI" id="CHEBI:15378"/>
        <dbReference type="ChEBI" id="CHEBI:30616"/>
        <dbReference type="ChEBI" id="CHEBI:33019"/>
        <dbReference type="ChEBI" id="CHEBI:58095"/>
        <dbReference type="ChEBI" id="CHEBI:78442"/>
        <dbReference type="ChEBI" id="CHEBI:78531"/>
        <dbReference type="ChEBI" id="CHEBI:456215"/>
        <dbReference type="EC" id="6.1.1.20"/>
    </reaction>
</comment>
<comment type="cofactor">
    <cofactor evidence="1">
        <name>Mg(2+)</name>
        <dbReference type="ChEBI" id="CHEBI:18420"/>
    </cofactor>
    <text evidence="1">Binds 2 magnesium ions per tetramer.</text>
</comment>
<comment type="subunit">
    <text evidence="1">Tetramer of two alpha and two beta subunits.</text>
</comment>
<comment type="subcellular location">
    <subcellularLocation>
        <location evidence="1">Cytoplasm</location>
    </subcellularLocation>
</comment>
<comment type="similarity">
    <text evidence="1">Belongs to the class-II aminoacyl-tRNA synthetase family. Phe-tRNA synthetase alpha subunit type 1 subfamily.</text>
</comment>
<proteinExistence type="inferred from homology"/>
<evidence type="ECO:0000255" key="1">
    <source>
        <dbReference type="HAMAP-Rule" id="MF_00281"/>
    </source>
</evidence>
<gene>
    <name evidence="1" type="primary">pheS</name>
    <name type="ordered locus">ABC2680</name>
</gene>
<sequence>MREQLTALKHEALDKAEVAKSEQDIQAIRVAYLGKKGPITEVLRGMGKLSAEERPIIGALANEVRDEIKNKLDEKSKKLQEAAIKQQLEQESIDVTLPGRPALQGAIHPLTAVVTEIEEIFLGLGFSIGEGPEIETDYYNFEAMNLPKDHPARDMQDSFYVTEDLLLRTQTSPVQARTMEKFAGKGPVKVVVPGKVFRRDDDDATHSHQFMQVEGLYVDKKVRMSDLKGVLETFAKQFFGQDRSIRLRPSFFPFTEPSVEVDVSCGICSGKGCRVCKQSGWIEVLGAGMVHPRVLEMSGFDANEYSGFAFGMGVERLAMLKYDIDDIRQFYANDLRFLMQFKDV</sequence>
<keyword id="KW-0030">Aminoacyl-tRNA synthetase</keyword>
<keyword id="KW-0067">ATP-binding</keyword>
<keyword id="KW-0963">Cytoplasm</keyword>
<keyword id="KW-0436">Ligase</keyword>
<keyword id="KW-0460">Magnesium</keyword>
<keyword id="KW-0479">Metal-binding</keyword>
<keyword id="KW-0547">Nucleotide-binding</keyword>
<keyword id="KW-0648">Protein biosynthesis</keyword>
<keyword id="KW-1185">Reference proteome</keyword>
<dbReference type="EC" id="6.1.1.20" evidence="1"/>
<dbReference type="EMBL" id="AP006627">
    <property type="protein sequence ID" value="BAD65215.1"/>
    <property type="molecule type" value="Genomic_DNA"/>
</dbReference>
<dbReference type="RefSeq" id="WP_011247523.1">
    <property type="nucleotide sequence ID" value="NC_006582.1"/>
</dbReference>
<dbReference type="SMR" id="Q5WEJ5"/>
<dbReference type="STRING" id="66692.ABC2680"/>
<dbReference type="KEGG" id="bcl:ABC2680"/>
<dbReference type="eggNOG" id="COG0016">
    <property type="taxonomic scope" value="Bacteria"/>
</dbReference>
<dbReference type="HOGENOM" id="CLU_025086_0_1_9"/>
<dbReference type="OrthoDB" id="9800719at2"/>
<dbReference type="Proteomes" id="UP000001168">
    <property type="component" value="Chromosome"/>
</dbReference>
<dbReference type="GO" id="GO:0005737">
    <property type="term" value="C:cytoplasm"/>
    <property type="evidence" value="ECO:0007669"/>
    <property type="project" value="UniProtKB-SubCell"/>
</dbReference>
<dbReference type="GO" id="GO:0005524">
    <property type="term" value="F:ATP binding"/>
    <property type="evidence" value="ECO:0007669"/>
    <property type="project" value="UniProtKB-UniRule"/>
</dbReference>
<dbReference type="GO" id="GO:0140096">
    <property type="term" value="F:catalytic activity, acting on a protein"/>
    <property type="evidence" value="ECO:0007669"/>
    <property type="project" value="UniProtKB-ARBA"/>
</dbReference>
<dbReference type="GO" id="GO:0000287">
    <property type="term" value="F:magnesium ion binding"/>
    <property type="evidence" value="ECO:0007669"/>
    <property type="project" value="UniProtKB-UniRule"/>
</dbReference>
<dbReference type="GO" id="GO:0004826">
    <property type="term" value="F:phenylalanine-tRNA ligase activity"/>
    <property type="evidence" value="ECO:0007669"/>
    <property type="project" value="UniProtKB-UniRule"/>
</dbReference>
<dbReference type="GO" id="GO:0016740">
    <property type="term" value="F:transferase activity"/>
    <property type="evidence" value="ECO:0007669"/>
    <property type="project" value="UniProtKB-ARBA"/>
</dbReference>
<dbReference type="GO" id="GO:0000049">
    <property type="term" value="F:tRNA binding"/>
    <property type="evidence" value="ECO:0007669"/>
    <property type="project" value="InterPro"/>
</dbReference>
<dbReference type="GO" id="GO:0006432">
    <property type="term" value="P:phenylalanyl-tRNA aminoacylation"/>
    <property type="evidence" value="ECO:0007669"/>
    <property type="project" value="UniProtKB-UniRule"/>
</dbReference>
<dbReference type="CDD" id="cd00496">
    <property type="entry name" value="PheRS_alpha_core"/>
    <property type="match status" value="1"/>
</dbReference>
<dbReference type="FunFam" id="3.30.930.10:FF:000003">
    <property type="entry name" value="Phenylalanine--tRNA ligase alpha subunit"/>
    <property type="match status" value="1"/>
</dbReference>
<dbReference type="Gene3D" id="3.30.930.10">
    <property type="entry name" value="Bira Bifunctional Protein, Domain 2"/>
    <property type="match status" value="1"/>
</dbReference>
<dbReference type="HAMAP" id="MF_00281">
    <property type="entry name" value="Phe_tRNA_synth_alpha1"/>
    <property type="match status" value="1"/>
</dbReference>
<dbReference type="InterPro" id="IPR006195">
    <property type="entry name" value="aa-tRNA-synth_II"/>
</dbReference>
<dbReference type="InterPro" id="IPR045864">
    <property type="entry name" value="aa-tRNA-synth_II/BPL/LPL"/>
</dbReference>
<dbReference type="InterPro" id="IPR004529">
    <property type="entry name" value="Phe-tRNA-synth_IIc_asu"/>
</dbReference>
<dbReference type="InterPro" id="IPR004188">
    <property type="entry name" value="Phe-tRNA_ligase_II_N"/>
</dbReference>
<dbReference type="InterPro" id="IPR022911">
    <property type="entry name" value="Phe_tRNA_ligase_alpha1_bac"/>
</dbReference>
<dbReference type="InterPro" id="IPR002319">
    <property type="entry name" value="Phenylalanyl-tRNA_Synthase"/>
</dbReference>
<dbReference type="InterPro" id="IPR010978">
    <property type="entry name" value="tRNA-bd_arm"/>
</dbReference>
<dbReference type="NCBIfam" id="TIGR00468">
    <property type="entry name" value="pheS"/>
    <property type="match status" value="1"/>
</dbReference>
<dbReference type="PANTHER" id="PTHR11538:SF41">
    <property type="entry name" value="PHENYLALANINE--TRNA LIGASE, MITOCHONDRIAL"/>
    <property type="match status" value="1"/>
</dbReference>
<dbReference type="PANTHER" id="PTHR11538">
    <property type="entry name" value="PHENYLALANYL-TRNA SYNTHETASE"/>
    <property type="match status" value="1"/>
</dbReference>
<dbReference type="Pfam" id="PF02912">
    <property type="entry name" value="Phe_tRNA-synt_N"/>
    <property type="match status" value="1"/>
</dbReference>
<dbReference type="Pfam" id="PF01409">
    <property type="entry name" value="tRNA-synt_2d"/>
    <property type="match status" value="1"/>
</dbReference>
<dbReference type="SUPFAM" id="SSF55681">
    <property type="entry name" value="Class II aaRS and biotin synthetases"/>
    <property type="match status" value="1"/>
</dbReference>
<dbReference type="SUPFAM" id="SSF46589">
    <property type="entry name" value="tRNA-binding arm"/>
    <property type="match status" value="1"/>
</dbReference>
<dbReference type="PROSITE" id="PS50862">
    <property type="entry name" value="AA_TRNA_LIGASE_II"/>
    <property type="match status" value="1"/>
</dbReference>
<feature type="chain" id="PRO_0000126665" description="Phenylalanine--tRNA ligase alpha subunit">
    <location>
        <begin position="1"/>
        <end position="344"/>
    </location>
</feature>
<feature type="binding site" evidence="1">
    <location>
        <position position="256"/>
    </location>
    <ligand>
        <name>Mg(2+)</name>
        <dbReference type="ChEBI" id="CHEBI:18420"/>
        <note>shared with beta subunit</note>
    </ligand>
</feature>
<reference key="1">
    <citation type="submission" date="2003-10" db="EMBL/GenBank/DDBJ databases">
        <title>The complete genome sequence of the alkaliphilic Bacillus clausii KSM-K16.</title>
        <authorList>
            <person name="Takaki Y."/>
            <person name="Kageyama Y."/>
            <person name="Shimamura S."/>
            <person name="Suzuki H."/>
            <person name="Nishi S."/>
            <person name="Hatada Y."/>
            <person name="Kawai S."/>
            <person name="Ito S."/>
            <person name="Horikoshi K."/>
        </authorList>
    </citation>
    <scope>NUCLEOTIDE SEQUENCE [LARGE SCALE GENOMIC DNA]</scope>
    <source>
        <strain>KSM-K16</strain>
    </source>
</reference>
<protein>
    <recommendedName>
        <fullName evidence="1">Phenylalanine--tRNA ligase alpha subunit</fullName>
        <ecNumber evidence="1">6.1.1.20</ecNumber>
    </recommendedName>
    <alternativeName>
        <fullName evidence="1">Phenylalanyl-tRNA synthetase alpha subunit</fullName>
        <shortName evidence="1">PheRS</shortName>
    </alternativeName>
</protein>